<protein>
    <recommendedName>
        <fullName evidence="1">Small ribosomal subunit protein uS15</fullName>
    </recommendedName>
    <alternativeName>
        <fullName evidence="2">30S ribosomal protein S15</fullName>
    </alternativeName>
</protein>
<reference key="1">
    <citation type="journal article" date="2001" name="Nature">
        <title>Massive gene decay in the leprosy bacillus.</title>
        <authorList>
            <person name="Cole S.T."/>
            <person name="Eiglmeier K."/>
            <person name="Parkhill J."/>
            <person name="James K.D."/>
            <person name="Thomson N.R."/>
            <person name="Wheeler P.R."/>
            <person name="Honore N."/>
            <person name="Garnier T."/>
            <person name="Churcher C.M."/>
            <person name="Harris D.E."/>
            <person name="Mungall K.L."/>
            <person name="Basham D."/>
            <person name="Brown D."/>
            <person name="Chillingworth T."/>
            <person name="Connor R."/>
            <person name="Davies R.M."/>
            <person name="Devlin K."/>
            <person name="Duthoy S."/>
            <person name="Feltwell T."/>
            <person name="Fraser A."/>
            <person name="Hamlin N."/>
            <person name="Holroyd S."/>
            <person name="Hornsby T."/>
            <person name="Jagels K."/>
            <person name="Lacroix C."/>
            <person name="Maclean J."/>
            <person name="Moule S."/>
            <person name="Murphy L.D."/>
            <person name="Oliver K."/>
            <person name="Quail M.A."/>
            <person name="Rajandream M.A."/>
            <person name="Rutherford K.M."/>
            <person name="Rutter S."/>
            <person name="Seeger K."/>
            <person name="Simon S."/>
            <person name="Simmonds M."/>
            <person name="Skelton J."/>
            <person name="Squares R."/>
            <person name="Squares S."/>
            <person name="Stevens K."/>
            <person name="Taylor K."/>
            <person name="Whitehead S."/>
            <person name="Woodward J.R."/>
            <person name="Barrell B.G."/>
        </authorList>
    </citation>
    <scope>NUCLEOTIDE SEQUENCE [LARGE SCALE GENOMIC DNA]</scope>
    <source>
        <strain>TN</strain>
    </source>
</reference>
<proteinExistence type="inferred from homology"/>
<gene>
    <name evidence="1" type="primary">rpsO</name>
    <name type="ordered locus">ML0853</name>
    <name type="ORF">MLCB22.28c</name>
</gene>
<feature type="chain" id="PRO_0000115471" description="Small ribosomal subunit protein uS15">
    <location>
        <begin position="1"/>
        <end position="89"/>
    </location>
</feature>
<dbReference type="EMBL" id="Z98741">
    <property type="protein sequence ID" value="CAB11393.1"/>
    <property type="molecule type" value="Genomic_DNA"/>
</dbReference>
<dbReference type="EMBL" id="AL583920">
    <property type="protein sequence ID" value="CAC31234.1"/>
    <property type="molecule type" value="Genomic_DNA"/>
</dbReference>
<dbReference type="PIR" id="T44901">
    <property type="entry name" value="T44901"/>
</dbReference>
<dbReference type="RefSeq" id="NP_301642.1">
    <property type="nucleotide sequence ID" value="NC_002677.1"/>
</dbReference>
<dbReference type="RefSeq" id="WP_010907966.1">
    <property type="nucleotide sequence ID" value="NC_002677.1"/>
</dbReference>
<dbReference type="SMR" id="O32967"/>
<dbReference type="STRING" id="272631.gene:17574679"/>
<dbReference type="KEGG" id="mle:ML0853"/>
<dbReference type="PATRIC" id="fig|272631.5.peg.1575"/>
<dbReference type="Leproma" id="ML0853"/>
<dbReference type="eggNOG" id="COG0184">
    <property type="taxonomic scope" value="Bacteria"/>
</dbReference>
<dbReference type="HOGENOM" id="CLU_148518_0_0_11"/>
<dbReference type="OrthoDB" id="9799262at2"/>
<dbReference type="Proteomes" id="UP000000806">
    <property type="component" value="Chromosome"/>
</dbReference>
<dbReference type="GO" id="GO:0022627">
    <property type="term" value="C:cytosolic small ribosomal subunit"/>
    <property type="evidence" value="ECO:0007669"/>
    <property type="project" value="TreeGrafter"/>
</dbReference>
<dbReference type="GO" id="GO:0019843">
    <property type="term" value="F:rRNA binding"/>
    <property type="evidence" value="ECO:0007669"/>
    <property type="project" value="UniProtKB-UniRule"/>
</dbReference>
<dbReference type="GO" id="GO:0003735">
    <property type="term" value="F:structural constituent of ribosome"/>
    <property type="evidence" value="ECO:0007669"/>
    <property type="project" value="InterPro"/>
</dbReference>
<dbReference type="GO" id="GO:0006412">
    <property type="term" value="P:translation"/>
    <property type="evidence" value="ECO:0007669"/>
    <property type="project" value="UniProtKB-UniRule"/>
</dbReference>
<dbReference type="CDD" id="cd00353">
    <property type="entry name" value="Ribosomal_S15p_S13e"/>
    <property type="match status" value="1"/>
</dbReference>
<dbReference type="FunFam" id="1.10.287.10:FF:000002">
    <property type="entry name" value="30S ribosomal protein S15"/>
    <property type="match status" value="1"/>
</dbReference>
<dbReference type="Gene3D" id="6.10.250.3130">
    <property type="match status" value="1"/>
</dbReference>
<dbReference type="Gene3D" id="1.10.287.10">
    <property type="entry name" value="S15/NS1, RNA-binding"/>
    <property type="match status" value="1"/>
</dbReference>
<dbReference type="HAMAP" id="MF_01343_B">
    <property type="entry name" value="Ribosomal_uS15_B"/>
    <property type="match status" value="1"/>
</dbReference>
<dbReference type="InterPro" id="IPR000589">
    <property type="entry name" value="Ribosomal_uS15"/>
</dbReference>
<dbReference type="InterPro" id="IPR005290">
    <property type="entry name" value="Ribosomal_uS15_bac-type"/>
</dbReference>
<dbReference type="InterPro" id="IPR009068">
    <property type="entry name" value="uS15_NS1_RNA-bd_sf"/>
</dbReference>
<dbReference type="NCBIfam" id="TIGR00952">
    <property type="entry name" value="S15_bact"/>
    <property type="match status" value="1"/>
</dbReference>
<dbReference type="PANTHER" id="PTHR23321">
    <property type="entry name" value="RIBOSOMAL PROTEIN S15, BACTERIAL AND ORGANELLAR"/>
    <property type="match status" value="1"/>
</dbReference>
<dbReference type="PANTHER" id="PTHR23321:SF26">
    <property type="entry name" value="SMALL RIBOSOMAL SUBUNIT PROTEIN US15M"/>
    <property type="match status" value="1"/>
</dbReference>
<dbReference type="Pfam" id="PF00312">
    <property type="entry name" value="Ribosomal_S15"/>
    <property type="match status" value="1"/>
</dbReference>
<dbReference type="SMART" id="SM01387">
    <property type="entry name" value="Ribosomal_S15"/>
    <property type="match status" value="1"/>
</dbReference>
<dbReference type="SUPFAM" id="SSF47060">
    <property type="entry name" value="S15/NS1 RNA-binding domain"/>
    <property type="match status" value="1"/>
</dbReference>
<dbReference type="PROSITE" id="PS00362">
    <property type="entry name" value="RIBOSOMAL_S15"/>
    <property type="match status" value="1"/>
</dbReference>
<sequence length="89" mass="10348">MALTSEQKKEILSSYGLHATDTGSPEAQIALLTKRIADLTEHLKVHKHDHHSRRGLLLLVGRRRRLIKYLSLIDVQRYRSLIERLGLRR</sequence>
<evidence type="ECO:0000255" key="1">
    <source>
        <dbReference type="HAMAP-Rule" id="MF_01343"/>
    </source>
</evidence>
<evidence type="ECO:0000305" key="2"/>
<organism>
    <name type="scientific">Mycobacterium leprae (strain TN)</name>
    <dbReference type="NCBI Taxonomy" id="272631"/>
    <lineage>
        <taxon>Bacteria</taxon>
        <taxon>Bacillati</taxon>
        <taxon>Actinomycetota</taxon>
        <taxon>Actinomycetes</taxon>
        <taxon>Mycobacteriales</taxon>
        <taxon>Mycobacteriaceae</taxon>
        <taxon>Mycobacterium</taxon>
    </lineage>
</organism>
<name>RS15_MYCLE</name>
<accession>O32967</accession>
<comment type="function">
    <text evidence="1">One of the primary rRNA binding proteins, it binds directly to 16S rRNA where it helps nucleate assembly of the platform of the 30S subunit by binding and bridging several RNA helices of the 16S rRNA.</text>
</comment>
<comment type="function">
    <text evidence="1">Forms an intersubunit bridge (bridge B4) with the 23S rRNA of the 50S subunit in the ribosome.</text>
</comment>
<comment type="subunit">
    <text evidence="1">Part of the 30S ribosomal subunit. Forms a bridge to the 50S subunit in the 70S ribosome, contacting the 23S rRNA.</text>
</comment>
<comment type="similarity">
    <text evidence="1">Belongs to the universal ribosomal protein uS15 family.</text>
</comment>
<keyword id="KW-1185">Reference proteome</keyword>
<keyword id="KW-0687">Ribonucleoprotein</keyword>
<keyword id="KW-0689">Ribosomal protein</keyword>
<keyword id="KW-0694">RNA-binding</keyword>
<keyword id="KW-0699">rRNA-binding</keyword>